<comment type="function">
    <text>Involved in quinolone resistance. May constitute a membrane-associated active efflux pump of hydrophilic quinolones.</text>
</comment>
<comment type="subcellular location">
    <subcellularLocation>
        <location evidence="2">Cell membrane</location>
        <topology evidence="2">Multi-pass membrane protein</topology>
    </subcellularLocation>
</comment>
<comment type="similarity">
    <text evidence="2">Belongs to the major facilitator superfamily. TCR/Tet family.</text>
</comment>
<protein>
    <recommendedName>
        <fullName>Quinolone resistance protein NorA</fullName>
    </recommendedName>
</protein>
<proteinExistence type="evidence at protein level"/>
<reference key="1">
    <citation type="journal article" date="1990" name="J. Bacteriol.">
        <title>Nucleotide sequence and characterization of the Staphylococcus aureus norA gene, which confers resistance to quinolones.</title>
        <authorList>
            <person name="Yoshida H."/>
            <person name="Bogaki M."/>
            <person name="Nakamura S."/>
            <person name="Ubukata K."/>
            <person name="Konno M."/>
        </authorList>
    </citation>
    <scope>NUCLEOTIDE SEQUENCE [GENOMIC DNA]</scope>
</reference>
<reference key="2">
    <citation type="journal article" date="1990" name="Biochem. Biophys. Res. Commun.">
        <title>A point mutation in norA gene is responsible for quinolone resistance in Staphylococcus aureus.</title>
        <authorList>
            <person name="Ohshita Y."/>
            <person name="Hiramatsu K."/>
            <person name="Yokota T."/>
        </authorList>
    </citation>
    <scope>NUCLEOTIDE SEQUENCE [GENOMIC DNA] OF 230-388</scope>
    <source>
        <strain>ATCC 21027 / 209-P</strain>
    </source>
</reference>
<accession>P0A0J7</accession>
<accession>P21191</accession>
<dbReference type="EMBL" id="D90119">
    <property type="protein sequence ID" value="BAA14147.1"/>
    <property type="molecule type" value="Genomic_DNA"/>
</dbReference>
<dbReference type="EMBL" id="M62960">
    <property type="protein sequence ID" value="AAB59089.1"/>
    <property type="molecule type" value="Genomic_DNA"/>
</dbReference>
<dbReference type="PIR" id="A36242">
    <property type="entry name" value="A36242"/>
</dbReference>
<dbReference type="PIR" id="A37838">
    <property type="entry name" value="A37838"/>
</dbReference>
<dbReference type="RefSeq" id="WP_001041274.1">
    <property type="nucleotide sequence ID" value="NZ_WYDB01000004.1"/>
</dbReference>
<dbReference type="PDB" id="7LO7">
    <property type="method" value="EM"/>
    <property type="resolution" value="3.74 A"/>
    <property type="chains" value="Z=1-388"/>
</dbReference>
<dbReference type="PDB" id="7LO8">
    <property type="method" value="EM"/>
    <property type="resolution" value="3.16 A"/>
    <property type="chains" value="Z=1-388"/>
</dbReference>
<dbReference type="PDB" id="8TTE">
    <property type="method" value="EM"/>
    <property type="resolution" value="3.26 A"/>
    <property type="chains" value="A=1-388"/>
</dbReference>
<dbReference type="PDB" id="8TTF">
    <property type="method" value="EM"/>
    <property type="resolution" value="3.61 A"/>
    <property type="chains" value="A=1-388"/>
</dbReference>
<dbReference type="PDB" id="8TTG">
    <property type="method" value="EM"/>
    <property type="resolution" value="3.35 A"/>
    <property type="chains" value="A=1-388"/>
</dbReference>
<dbReference type="PDB" id="8TTH">
    <property type="method" value="EM"/>
    <property type="resolution" value="3.54 A"/>
    <property type="chains" value="A=1-388"/>
</dbReference>
<dbReference type="PDBsum" id="7LO7"/>
<dbReference type="PDBsum" id="7LO8"/>
<dbReference type="PDBsum" id="8TTE"/>
<dbReference type="PDBsum" id="8TTF"/>
<dbReference type="PDBsum" id="8TTG"/>
<dbReference type="PDBsum" id="8TTH"/>
<dbReference type="SMR" id="P0A0J7"/>
<dbReference type="BindingDB" id="P0A0J7"/>
<dbReference type="ChEMBL" id="CHEMBL5114"/>
<dbReference type="DrugCentral" id="P0A0J7"/>
<dbReference type="TCDB" id="2.A.1.2.10">
    <property type="family name" value="the major facilitator superfamily (mfs)"/>
</dbReference>
<dbReference type="OMA" id="TYGMDLA"/>
<dbReference type="GO" id="GO:0005886">
    <property type="term" value="C:plasma membrane"/>
    <property type="evidence" value="ECO:0007669"/>
    <property type="project" value="UniProtKB-SubCell"/>
</dbReference>
<dbReference type="GO" id="GO:0042910">
    <property type="term" value="F:xenobiotic transmembrane transporter activity"/>
    <property type="evidence" value="ECO:0007669"/>
    <property type="project" value="InterPro"/>
</dbReference>
<dbReference type="CDD" id="cd17325">
    <property type="entry name" value="MFS_MdtG_SLC18_like"/>
    <property type="match status" value="1"/>
</dbReference>
<dbReference type="Gene3D" id="1.20.1250.20">
    <property type="entry name" value="MFS general substrate transporter like domains"/>
    <property type="match status" value="1"/>
</dbReference>
<dbReference type="InterPro" id="IPR011701">
    <property type="entry name" value="MFS"/>
</dbReference>
<dbReference type="InterPro" id="IPR020846">
    <property type="entry name" value="MFS_dom"/>
</dbReference>
<dbReference type="InterPro" id="IPR050189">
    <property type="entry name" value="MFS_Efflux_Transporters"/>
</dbReference>
<dbReference type="InterPro" id="IPR036259">
    <property type="entry name" value="MFS_trans_sf"/>
</dbReference>
<dbReference type="InterPro" id="IPR004734">
    <property type="entry name" value="Multidrug-R"/>
</dbReference>
<dbReference type="InterPro" id="IPR001958">
    <property type="entry name" value="Tet-R_TetA/multi-R_MdtG-like"/>
</dbReference>
<dbReference type="NCBIfam" id="TIGR00880">
    <property type="entry name" value="2_A_01_02"/>
    <property type="match status" value="1"/>
</dbReference>
<dbReference type="PANTHER" id="PTHR43124:SF3">
    <property type="entry name" value="CHLORAMPHENICOL EFFLUX PUMP RV0191"/>
    <property type="match status" value="1"/>
</dbReference>
<dbReference type="PANTHER" id="PTHR43124">
    <property type="entry name" value="PURINE EFFLUX PUMP PBUE"/>
    <property type="match status" value="1"/>
</dbReference>
<dbReference type="Pfam" id="PF07690">
    <property type="entry name" value="MFS_1"/>
    <property type="match status" value="1"/>
</dbReference>
<dbReference type="PRINTS" id="PR01035">
    <property type="entry name" value="TCRTETA"/>
</dbReference>
<dbReference type="SUPFAM" id="SSF103473">
    <property type="entry name" value="MFS general substrate transporter"/>
    <property type="match status" value="1"/>
</dbReference>
<dbReference type="PROSITE" id="PS50850">
    <property type="entry name" value="MFS"/>
    <property type="match status" value="1"/>
</dbReference>
<sequence length="388" mass="42265">MNKQIFVLYFNIFLIFLGIGLVIPVLPVYLKDLGLTGSDLGLLVAAFALSQMIISPFGGTLADKLGKKLIICIGLILFSVSEFMFAVGHNFSVLMLSRVIGGMSAGMVMPGVTGLIADISPSHQKAKNFGYMSAIINSGFILGPGIGGFMAEVSHRMPFYFAGALGILAFIMSIVLIHDPKKSTTSGFQKLEPQLLTKINWKVFITPVILTLVLSFGLSAFETLYSLYTADKVNYSPKDISIAITGGGIFGALFQIYFFDKFMKYFSELTFIAWSLLYSVVVLILLVFANGYWSIMLISFVVFIGFDMIRPAITNYFSNIAGERQGFAGGLNSTFTSMGNFIGPLIAGALFDVHIEAPIYMAIGVSLAGVVIVLIEKQHRAKLKEQNM</sequence>
<evidence type="ECO:0000255" key="1"/>
<evidence type="ECO:0000305" key="2"/>
<evidence type="ECO:0007829" key="3">
    <source>
        <dbReference type="PDB" id="7LO8"/>
    </source>
</evidence>
<evidence type="ECO:0007829" key="4">
    <source>
        <dbReference type="PDB" id="8TTE"/>
    </source>
</evidence>
<name>NORA_STAAU</name>
<organism>
    <name type="scientific">Staphylococcus aureus</name>
    <dbReference type="NCBI Taxonomy" id="1280"/>
    <lineage>
        <taxon>Bacteria</taxon>
        <taxon>Bacillati</taxon>
        <taxon>Bacillota</taxon>
        <taxon>Bacilli</taxon>
        <taxon>Bacillales</taxon>
        <taxon>Staphylococcaceae</taxon>
        <taxon>Staphylococcus</taxon>
    </lineage>
</organism>
<gene>
    <name type="primary">norA</name>
</gene>
<feature type="chain" id="PRO_0000173374" description="Quinolone resistance protein NorA">
    <location>
        <begin position="1"/>
        <end position="388"/>
    </location>
</feature>
<feature type="transmembrane region" description="Helical" evidence="1">
    <location>
        <begin position="5"/>
        <end position="25"/>
    </location>
</feature>
<feature type="transmembrane region" description="Helical" evidence="1">
    <location>
        <begin position="42"/>
        <end position="62"/>
    </location>
</feature>
<feature type="transmembrane region" description="Helical" evidence="1">
    <location>
        <begin position="69"/>
        <end position="89"/>
    </location>
</feature>
<feature type="transmembrane region" description="Helical" evidence="1">
    <location>
        <begin position="99"/>
        <end position="119"/>
    </location>
</feature>
<feature type="transmembrane region" description="Helical" evidence="1">
    <location>
        <begin position="129"/>
        <end position="149"/>
    </location>
</feature>
<feature type="transmembrane region" description="Helical" evidence="1">
    <location>
        <begin position="157"/>
        <end position="177"/>
    </location>
</feature>
<feature type="transmembrane region" description="Helical" evidence="1">
    <location>
        <begin position="201"/>
        <end position="221"/>
    </location>
</feature>
<feature type="transmembrane region" description="Helical" evidence="1">
    <location>
        <begin position="239"/>
        <end position="259"/>
    </location>
</feature>
<feature type="transmembrane region" description="Helical" evidence="1">
    <location>
        <begin position="269"/>
        <end position="289"/>
    </location>
</feature>
<feature type="transmembrane region" description="Helical" evidence="1">
    <location>
        <begin position="293"/>
        <end position="313"/>
    </location>
</feature>
<feature type="transmembrane region" description="Helical" evidence="1">
    <location>
        <begin position="331"/>
        <end position="351"/>
    </location>
</feature>
<feature type="transmembrane region" description="Helical" evidence="1">
    <location>
        <begin position="355"/>
        <end position="375"/>
    </location>
</feature>
<feature type="sequence variant" description="No quinolone resistance.">
    <original>D</original>
    <variation>A</variation>
    <location>
        <position position="352"/>
    </location>
</feature>
<feature type="sequence conflict" description="In Ref. 2; AAB59089." evidence="2" ref="2">
    <original>M</original>
    <variation>V</variation>
    <location>
        <position position="263"/>
    </location>
</feature>
<feature type="sequence conflict" description="In Ref. 2; AAB59089." evidence="2" ref="2">
    <original>A</original>
    <variation>D</variation>
    <location>
        <position position="362"/>
    </location>
</feature>
<feature type="helix" evidence="3">
    <location>
        <begin position="4"/>
        <end position="21"/>
    </location>
</feature>
<feature type="turn" evidence="3">
    <location>
        <begin position="22"/>
        <end position="25"/>
    </location>
</feature>
<feature type="helix" evidence="3">
    <location>
        <begin position="26"/>
        <end position="32"/>
    </location>
</feature>
<feature type="helix" evidence="3">
    <location>
        <begin position="38"/>
        <end position="54"/>
    </location>
</feature>
<feature type="turn" evidence="3">
    <location>
        <begin position="55"/>
        <end position="59"/>
    </location>
</feature>
<feature type="helix" evidence="3">
    <location>
        <begin position="62"/>
        <end position="65"/>
    </location>
</feature>
<feature type="helix" evidence="3">
    <location>
        <begin position="67"/>
        <end position="85"/>
    </location>
</feature>
<feature type="helix" evidence="3">
    <location>
        <begin position="94"/>
        <end position="107"/>
    </location>
</feature>
<feature type="helix" evidence="3">
    <location>
        <begin position="109"/>
        <end position="115"/>
    </location>
</feature>
<feature type="turn" evidence="3">
    <location>
        <begin position="116"/>
        <end position="118"/>
    </location>
</feature>
<feature type="strand" evidence="3">
    <location>
        <begin position="122"/>
        <end position="124"/>
    </location>
</feature>
<feature type="helix" evidence="3">
    <location>
        <begin position="125"/>
        <end position="149"/>
    </location>
</feature>
<feature type="turn" evidence="3">
    <location>
        <begin position="152"/>
        <end position="156"/>
    </location>
</feature>
<feature type="helix" evidence="3">
    <location>
        <begin position="157"/>
        <end position="176"/>
    </location>
</feature>
<feature type="helix" evidence="4">
    <location>
        <begin position="195"/>
        <end position="198"/>
    </location>
</feature>
<feature type="helix" evidence="3">
    <location>
        <begin position="201"/>
        <end position="204"/>
    </location>
</feature>
<feature type="helix" evidence="3">
    <location>
        <begin position="205"/>
        <end position="223"/>
    </location>
</feature>
<feature type="helix" evidence="3">
    <location>
        <begin position="225"/>
        <end position="231"/>
    </location>
</feature>
<feature type="helix" evidence="3">
    <location>
        <begin position="237"/>
        <end position="256"/>
    </location>
</feature>
<feature type="helix" evidence="3">
    <location>
        <begin position="258"/>
        <end position="264"/>
    </location>
</feature>
<feature type="helix" evidence="3">
    <location>
        <begin position="268"/>
        <end position="288"/>
    </location>
</feature>
<feature type="helix" evidence="3">
    <location>
        <begin position="293"/>
        <end position="302"/>
    </location>
</feature>
<feature type="helix" evidence="3">
    <location>
        <begin position="304"/>
        <end position="307"/>
    </location>
</feature>
<feature type="helix" evidence="3">
    <location>
        <begin position="309"/>
        <end position="320"/>
    </location>
</feature>
<feature type="helix" evidence="3">
    <location>
        <begin position="325"/>
        <end position="351"/>
    </location>
</feature>
<feature type="helix" evidence="3">
    <location>
        <begin position="357"/>
        <end position="380"/>
    </location>
</feature>
<keyword id="KW-0002">3D-structure</keyword>
<keyword id="KW-1003">Cell membrane</keyword>
<keyword id="KW-0472">Membrane</keyword>
<keyword id="KW-0812">Transmembrane</keyword>
<keyword id="KW-1133">Transmembrane helix</keyword>
<keyword id="KW-0813">Transport</keyword>